<feature type="initiator methionine" description="Removed; by host">
    <location>
        <position position="1"/>
    </location>
</feature>
<feature type="chain" id="PRO_0000083195" description="Capsid protein">
    <location>
        <begin position="2"/>
        <end position="190"/>
    </location>
</feature>
<feature type="region of interest" description="Disordered" evidence="1">
    <location>
        <begin position="1"/>
        <end position="24"/>
    </location>
</feature>
<feature type="compositionally biased region" description="Basic residues" evidence="1">
    <location>
        <begin position="11"/>
        <end position="24"/>
    </location>
</feature>
<feature type="modified residue" description="N-acetylserine; by host" evidence="3">
    <location>
        <position position="2"/>
    </location>
</feature>
<feature type="sequence conflict" description="In Ref. 2; AAA46370." evidence="4" ref="2">
    <original>T</original>
    <variation>A</variation>
    <location>
        <position position="151"/>
    </location>
</feature>
<feature type="strand" evidence="5">
    <location>
        <begin position="50"/>
        <end position="58"/>
    </location>
</feature>
<feature type="strand" evidence="5">
    <location>
        <begin position="67"/>
        <end position="71"/>
    </location>
</feature>
<feature type="helix" evidence="5">
    <location>
        <begin position="76"/>
        <end position="78"/>
    </location>
</feature>
<feature type="helix" evidence="5">
    <location>
        <begin position="83"/>
        <end position="85"/>
    </location>
</feature>
<feature type="strand" evidence="5">
    <location>
        <begin position="87"/>
        <end position="97"/>
    </location>
</feature>
<feature type="strand" evidence="5">
    <location>
        <begin position="105"/>
        <end position="111"/>
    </location>
</feature>
<feature type="helix" evidence="5">
    <location>
        <begin position="116"/>
        <end position="118"/>
    </location>
</feature>
<feature type="helix" evidence="5">
    <location>
        <begin position="119"/>
        <end position="122"/>
    </location>
</feature>
<feature type="strand" evidence="5">
    <location>
        <begin position="131"/>
        <end position="133"/>
    </location>
</feature>
<feature type="strand" evidence="5">
    <location>
        <begin position="135"/>
        <end position="140"/>
    </location>
</feature>
<feature type="turn" evidence="5">
    <location>
        <begin position="141"/>
        <end position="144"/>
    </location>
</feature>
<feature type="helix" evidence="5">
    <location>
        <begin position="147"/>
        <end position="153"/>
    </location>
</feature>
<feature type="strand" evidence="5">
    <location>
        <begin position="154"/>
        <end position="162"/>
    </location>
</feature>
<feature type="strand" evidence="5">
    <location>
        <begin position="168"/>
        <end position="178"/>
    </location>
</feature>
<feature type="helix" evidence="5">
    <location>
        <begin position="182"/>
        <end position="184"/>
    </location>
</feature>
<sequence length="190" mass="20343">MSTVGTGKLTRAQRRAAARKNKRNTRVVQPVIVEPIASGQGKAIKAWTGYSVSKWTASCAAAEAKVTSAITISLPNELSSERNKQLKVGRVLLWLGLLPSVSGTVKSCVTETQTTAAASFQVALAVADNSKDVVAAMYPEAFKGITLEQLTADLTIYLYSSAALTEGDVIVHLEVEHVRPTFDDSFTPVY</sequence>
<name>CAPSD_CCMV</name>
<gene>
    <name type="ORF">ORF3b</name>
</gene>
<comment type="function">
    <text evidence="2">Capsid protein. Probably binds RNA and plays a role in packaging.</text>
</comment>
<comment type="subcellular location">
    <subcellularLocation>
        <location evidence="4">Virion</location>
    </subcellularLocation>
</comment>
<comment type="domain">
    <text evidence="2">The N-terminal arginine-rich stretch does not seem to be the major RNA-binding region that allows formation of an infectious ribonucleoprotein complex.</text>
</comment>
<comment type="similarity">
    <text evidence="4">Belongs to the bromovirus capsid protein family.</text>
</comment>
<comment type="online information" name="Virus Particle ExploreR db">
    <link uri="https://viperdb.org/Info_Page.php?VDB=rcmv"/>
    <text>Icosahedral capsid structure</text>
</comment>
<organism>
    <name type="scientific">Cowpea chlorotic mottle virus</name>
    <name type="common">CCMV</name>
    <dbReference type="NCBI Taxonomy" id="12303"/>
    <lineage>
        <taxon>Viruses</taxon>
        <taxon>Riboviria</taxon>
        <taxon>Orthornavirae</taxon>
        <taxon>Kitrinoviricota</taxon>
        <taxon>Alsuviricetes</taxon>
        <taxon>Martellivirales</taxon>
        <taxon>Bromoviridae</taxon>
        <taxon>Bromovirus</taxon>
    </lineage>
</organism>
<keyword id="KW-0002">3D-structure</keyword>
<keyword id="KW-0007">Acetylation</keyword>
<keyword id="KW-0167">Capsid protein</keyword>
<keyword id="KW-0687">Ribonucleoprotein</keyword>
<keyword id="KW-0694">RNA-binding</keyword>
<keyword id="KW-1142">T=3 icosahedral capsid protein</keyword>
<keyword id="KW-0543">Viral nucleoprotein</keyword>
<keyword id="KW-0946">Virion</keyword>
<proteinExistence type="evidence at protein level"/>
<evidence type="ECO:0000256" key="1">
    <source>
        <dbReference type="SAM" id="MobiDB-lite"/>
    </source>
</evidence>
<evidence type="ECO:0000269" key="2">
    <source>
    </source>
</evidence>
<evidence type="ECO:0000269" key="3">
    <source>
    </source>
</evidence>
<evidence type="ECO:0000305" key="4"/>
<evidence type="ECO:0007829" key="5">
    <source>
        <dbReference type="PDB" id="8C38"/>
    </source>
</evidence>
<accession>P03601</accession>
<organismHost>
    <name type="scientific">Glycine max</name>
    <name type="common">Soybean</name>
    <name type="synonym">Glycine hispida</name>
    <dbReference type="NCBI Taxonomy" id="3847"/>
</organismHost>
<organismHost>
    <name type="scientific">Vigna unguiculata</name>
    <name type="common">Cowpea</name>
    <dbReference type="NCBI Taxonomy" id="3917"/>
</organismHost>
<reference key="1">
    <citation type="journal article" date="1989" name="Virology">
        <title>Sequence of cowpea chlorotic mottle virus RNAs 2 and 3 and evidence of a recombination event during bromovirus evolution.</title>
        <authorList>
            <person name="Allison R.F."/>
            <person name="Janda M."/>
            <person name="Ahlquist P."/>
        </authorList>
    </citation>
    <scope>NUCLEOTIDE SEQUENCE [GENOMIC RNA]</scope>
</reference>
<reference key="2">
    <citation type="journal article" date="1982" name="Nucleic Acids Res.">
        <title>Complete nucleotide sequences of the coat protein messenger RNAs of brome mosaic virus and cowpea chlorotic mottle virus.</title>
        <authorList>
            <person name="Dasgupta R."/>
            <person name="Kaesberg P."/>
        </authorList>
    </citation>
    <scope>NUCLEOTIDE SEQUENCE [GENOMIC RNA]</scope>
</reference>
<reference key="3">
    <citation type="journal article" date="2005" name="J. Virol.">
        <title>Deletion of highly conserved arginine-rich RNA binding motif in cowpea chlorotic mottle virus capsid protein results in virion structural alterations and RNA packaging constraints.</title>
        <authorList>
            <person name="Annamalai P."/>
            <person name="Apte S."/>
            <person name="Wilkens S."/>
            <person name="Rao A.L."/>
        </authorList>
    </citation>
    <scope>FUNCTION</scope>
    <scope>DOMAIN ARG-RICH MOTIF</scope>
</reference>
<reference key="4">
    <citation type="journal article" date="1995" name="Structure">
        <title>Structures of the native and swollen forms of cowpea chlorotic mottle virus determined by X-ray crystallography and cryo-electron microscopy.</title>
        <authorList>
            <person name="Speir J.A."/>
            <person name="Munshi S."/>
            <person name="Wang G."/>
            <person name="Baker T.S."/>
            <person name="Johnson J.E."/>
        </authorList>
    </citation>
    <scope>X-RAY CRYSTALLOGRAPHY (3.2 ANGSTROMS)</scope>
</reference>
<reference key="5">
    <citation type="journal article" date="1991" name="Eur. J. Biochem.">
        <title>Conformational studies on a peptide fragment representing the RNA-binding N-terminus of a viral coat protein using circular dichroism and NMR spectroscopy.</title>
        <authorList>
            <person name="van der Graaf M."/>
            <person name="Hemminga M.A."/>
        </authorList>
    </citation>
    <scope>STRUCTURE BY NMR OF 1-26</scope>
    <scope>ACETYLATION AT SER-2</scope>
</reference>
<reference key="6">
    <citation type="journal article" date="1991" name="Biochemistry">
        <title>Solution conformation of a peptide fragment representing a proposed RNA-binding site of a viral coat protein studied by two-dimensional NMR.</title>
        <authorList>
            <person name="van der Graaf M."/>
            <person name="van Mierlo C.P.M."/>
            <person name="Hemminga M.A."/>
        </authorList>
    </citation>
    <scope>STRUCTURE BY NMR OF 1-26</scope>
</reference>
<reference key="7">
    <citation type="journal article" date="1991" name="J. Mol. Biol.">
        <title>Conformation and mobility of the RNA-binding N-terminal part of the intact coat protein of cowpea chlorotic mottle virus. A two-dimensional proton nuclear magnetic resonance study.</title>
        <authorList>
            <person name="van der Graaf M."/>
            <person name="Kroon G.J.A."/>
            <person name="Hemminga M.A."/>
        </authorList>
    </citation>
    <scope>STRUCTURE BY NMR OF 1-34</scope>
</reference>
<protein>
    <recommendedName>
        <fullName>Capsid protein</fullName>
        <shortName>CP</shortName>
    </recommendedName>
    <alternativeName>
        <fullName>Coat protein</fullName>
    </alternativeName>
</protein>
<dbReference type="EMBL" id="M28818">
    <property type="protein sequence ID" value="AAA46373.1"/>
    <property type="molecule type" value="Genomic_RNA"/>
</dbReference>
<dbReference type="EMBL" id="J02052">
    <property type="protein sequence ID" value="AAA46370.1"/>
    <property type="molecule type" value="Genomic_RNA"/>
</dbReference>
<dbReference type="PIR" id="A04212">
    <property type="entry name" value="VCBVC"/>
</dbReference>
<dbReference type="RefSeq" id="NP_613277.1">
    <property type="nucleotide sequence ID" value="NC_003542.1"/>
</dbReference>
<dbReference type="PDB" id="1CWP">
    <property type="method" value="X-ray"/>
    <property type="resolution" value="3.20 A"/>
    <property type="chains" value="A/B/C=1-190"/>
</dbReference>
<dbReference type="PDB" id="1ZA7">
    <property type="method" value="X-ray"/>
    <property type="resolution" value="2.70 A"/>
    <property type="chains" value="A/B/C=26-190"/>
</dbReference>
<dbReference type="PDB" id="8BI4">
    <property type="method" value="EM"/>
    <property type="resolution" value="4.30 A"/>
    <property type="chains" value="A/B/C/D/E/F=1-190"/>
</dbReference>
<dbReference type="PDB" id="8C38">
    <property type="method" value="EM"/>
    <property type="resolution" value="1.64 A"/>
    <property type="chains" value="C/D/I=1-190"/>
</dbReference>
<dbReference type="PDB" id="8CPY">
    <property type="method" value="EM"/>
    <property type="resolution" value="3.90 A"/>
    <property type="chains" value="C/D/I=1-190"/>
</dbReference>
<dbReference type="PDBsum" id="1CWP"/>
<dbReference type="PDBsum" id="1ZA7"/>
<dbReference type="PDBsum" id="8BI4"/>
<dbReference type="PDBsum" id="8C38"/>
<dbReference type="PDBsum" id="8CPY"/>
<dbReference type="BMRB" id="P03601"/>
<dbReference type="EMDB" id="EMD-16400"/>
<dbReference type="EMDB" id="EMD-16790"/>
<dbReference type="SMR" id="P03601"/>
<dbReference type="iPTMnet" id="P03601"/>
<dbReference type="KEGG" id="vg:962152"/>
<dbReference type="OrthoDB" id="17901at10239"/>
<dbReference type="EvolutionaryTrace" id="P03601"/>
<dbReference type="Proteomes" id="UP000008445">
    <property type="component" value="Genome"/>
</dbReference>
<dbReference type="GO" id="GO:1990904">
    <property type="term" value="C:ribonucleoprotein complex"/>
    <property type="evidence" value="ECO:0007669"/>
    <property type="project" value="UniProtKB-KW"/>
</dbReference>
<dbReference type="GO" id="GO:0039617">
    <property type="term" value="C:T=3 icosahedral viral capsid"/>
    <property type="evidence" value="ECO:0007669"/>
    <property type="project" value="UniProtKB-KW"/>
</dbReference>
<dbReference type="GO" id="GO:0019013">
    <property type="term" value="C:viral nucleocapsid"/>
    <property type="evidence" value="ECO:0007669"/>
    <property type="project" value="UniProtKB-KW"/>
</dbReference>
<dbReference type="GO" id="GO:0003723">
    <property type="term" value="F:RNA binding"/>
    <property type="evidence" value="ECO:0007669"/>
    <property type="project" value="UniProtKB-KW"/>
</dbReference>
<dbReference type="GO" id="GO:0005198">
    <property type="term" value="F:structural molecule activity"/>
    <property type="evidence" value="ECO:0007669"/>
    <property type="project" value="InterPro"/>
</dbReference>
<dbReference type="Gene3D" id="2.60.120.220">
    <property type="entry name" value="Satellite virus coat domain"/>
    <property type="match status" value="1"/>
</dbReference>
<dbReference type="InterPro" id="IPR002009">
    <property type="entry name" value="Bromo_CP"/>
</dbReference>
<dbReference type="Pfam" id="PF01318">
    <property type="entry name" value="Bromo_coat"/>
    <property type="match status" value="1"/>
</dbReference>
<dbReference type="SUPFAM" id="SSF88633">
    <property type="entry name" value="Positive stranded ssRNA viruses"/>
    <property type="match status" value="1"/>
</dbReference>